<proteinExistence type="inferred from homology"/>
<name>RTCB_PYRAB</name>
<accession>Q9V168</accession>
<accession>G8ZJ23</accession>
<evidence type="ECO:0000250" key="1">
    <source>
        <dbReference type="UniProtKB" id="O59245"/>
    </source>
</evidence>
<evidence type="ECO:0000255" key="2"/>
<evidence type="ECO:0000255" key="3">
    <source>
        <dbReference type="PROSITE-ProRule" id="PRU00273"/>
    </source>
</evidence>
<evidence type="ECO:0000305" key="4"/>
<gene>
    <name type="primary">rtcB</name>
    <name type="ordered locus">PYRAB05600</name>
    <name type="ORF">PAB0383</name>
</gene>
<comment type="function">
    <text evidence="1">Essential for tRNA splicing and maturation. Acts by directly joining spliced tRNA halves to mature-sized tRNAs. Joins RNA with 2',3'-cyclic-phosphate or 3'-phosphate ends to RNA with 5'-hydroxy ends.</text>
</comment>
<comment type="catalytic activity">
    <reaction evidence="1">
        <text>a 3'-end 3'-phospho-ribonucleotide-RNA + a 5'-end dephospho-ribonucleoside-RNA + GTP = a ribonucleotidyl-ribonucleotide-RNA + GMP + diphosphate</text>
        <dbReference type="Rhea" id="RHEA:68076"/>
        <dbReference type="Rhea" id="RHEA-COMP:10463"/>
        <dbReference type="Rhea" id="RHEA-COMP:13936"/>
        <dbReference type="Rhea" id="RHEA-COMP:17355"/>
        <dbReference type="ChEBI" id="CHEBI:33019"/>
        <dbReference type="ChEBI" id="CHEBI:37565"/>
        <dbReference type="ChEBI" id="CHEBI:58115"/>
        <dbReference type="ChEBI" id="CHEBI:83062"/>
        <dbReference type="ChEBI" id="CHEBI:138284"/>
        <dbReference type="ChEBI" id="CHEBI:173118"/>
        <dbReference type="EC" id="6.5.1.8"/>
    </reaction>
</comment>
<comment type="catalytic activity">
    <reaction evidence="1">
        <text>a 3'-end 2',3'-cyclophospho-ribonucleotide-RNA + a 5'-end dephospho-ribonucleoside-RNA + GTP + H2O = a ribonucleotidyl-ribonucleotide-RNA + GMP + diphosphate + H(+)</text>
        <dbReference type="Rhea" id="RHEA:68080"/>
        <dbReference type="Rhea" id="RHEA-COMP:10464"/>
        <dbReference type="Rhea" id="RHEA-COMP:13936"/>
        <dbReference type="Rhea" id="RHEA-COMP:17355"/>
        <dbReference type="ChEBI" id="CHEBI:15377"/>
        <dbReference type="ChEBI" id="CHEBI:15378"/>
        <dbReference type="ChEBI" id="CHEBI:33019"/>
        <dbReference type="ChEBI" id="CHEBI:37565"/>
        <dbReference type="ChEBI" id="CHEBI:58115"/>
        <dbReference type="ChEBI" id="CHEBI:83064"/>
        <dbReference type="ChEBI" id="CHEBI:138284"/>
        <dbReference type="ChEBI" id="CHEBI:173118"/>
        <dbReference type="EC" id="6.5.1.8"/>
    </reaction>
</comment>
<comment type="cofactor">
    <cofactor evidence="1">
        <name>Mn(2+)</name>
        <dbReference type="ChEBI" id="CHEBI:29035"/>
    </cofactor>
    <text evidence="1">Binds 2 manganese ions per subunit.</text>
</comment>
<comment type="subunit">
    <text evidence="1">Monomer.</text>
</comment>
<comment type="miscellaneous">
    <text evidence="1">Ligation proceeds through 3 nucleotidyl transfer steps, with 2',3'-cyclic phosphate termini being hydrolyzed to 3'-P termini in a step that precedes 3'-P activation with GMP. In the first nucleotidyl transfer step, RtcB reacts with GTP to form a covalent RtcB-histidine-GMP intermediate with release of PPi; in the second step, the GMP moiety is transferred to the RNA 3'-P; in the third step, the 5'-OH from the opposite RNA strand attacks the activated 3'-P to form a 3',5'-phosphodiester bond and release GMP.</text>
</comment>
<comment type="similarity">
    <text evidence="4">Belongs to the RtcB family.</text>
</comment>
<keyword id="KW-0068">Autocatalytic cleavage</keyword>
<keyword id="KW-0238">DNA-binding</keyword>
<keyword id="KW-0255">Endonuclease</keyword>
<keyword id="KW-0342">GTP-binding</keyword>
<keyword id="KW-0378">Hydrolase</keyword>
<keyword id="KW-0404">Intron homing</keyword>
<keyword id="KW-0436">Ligase</keyword>
<keyword id="KW-0464">Manganese</keyword>
<keyword id="KW-0479">Metal-binding</keyword>
<keyword id="KW-0540">Nuclease</keyword>
<keyword id="KW-0547">Nucleotide-binding</keyword>
<keyword id="KW-0651">Protein splicing</keyword>
<keyword id="KW-0819">tRNA processing</keyword>
<sequence>MTVPLKRIDKIRWEIPKFDKRMRVPGRVYADDVLLEKMKSDRTLEQAANVAMLPGIYKYSIVMPDGHQGYGFPIGGVAAFDVNEGVISPGGIGYDINCLAPGSKVLTEHGYWLKVEELPEKFKLQGVKVYNLDEGHNDTSNVAFVAEREVETGEMAVRVTTESGRIIEGSEDHPVLTPEGYVYLGNLKEGNLVIVYPFEGVEYEERKGVILDEDAFKDEDPQVLSFLREKGLVPLRWDDPRIGTIARILGFAFGDGYLGEMGGRLTLTFYGKEETLRELKKDLERLGISANLYVRESIETTSGHSEGKSLSIELRVTSRSFALFLEKLGMPRGKKTEKAYRVPGWILEAPLWVKRNFLAGLFAADGSIVEFKGNTPLPINLTQSKSDELAENLVEFLGDVAKLLAEFGIETTLYEVKSKKGVTYRLSIVGEDSIRTFVERINYEYDPEKKVKGLIAAAYLKLKERIVKEAHEAVKDDFPTFEEFAKERGYEGGFVAEKVVKVERVKPEYTKFYDIGVYHEAHNFIANGIVVHNCGVRLIRTNLTEKDVRPRIKQLVDTLFKNVPSGVGSQGRVRLHWTQIDDVLVDGAKWAVDNGYGWEEDLERLEEGGRMEGADPDAVSQRAKQRGAPQLGSLGSGNHFLEVQVVDKIFDPEVAKVYGLFEGQVVVMVHTGSRGLGHQVASDYLRIMERAIRKYRIPWPDRELVSVPFQSEEGQRYFSAMKAAANFAWANRQMITHWVRESFQEVFRQDPEDLGMSIVYDVAHNIGKVEEHEVDGKKVKVIVHRKGATRAFPPGHEAIPKIYRDVGQPVLIPGSMGTASYVLAGTEGAMKETFGSTCHGAGRVLSRKAATRQYRGDRIRQELLNRGIYVRAASMRVVAEEAPGAYKNVDNVVKVVSEAGIAKLVARMRPIGVAKG</sequence>
<reference key="1">
    <citation type="journal article" date="2003" name="Mol. Microbiol.">
        <title>An integrated analysis of the genome of the hyperthermophilic archaeon Pyrococcus abyssi.</title>
        <authorList>
            <person name="Cohen G.N."/>
            <person name="Barbe V."/>
            <person name="Flament D."/>
            <person name="Galperin M."/>
            <person name="Heilig R."/>
            <person name="Lecompte O."/>
            <person name="Poch O."/>
            <person name="Prieur D."/>
            <person name="Querellou J."/>
            <person name="Ripp R."/>
            <person name="Thierry J.-C."/>
            <person name="Van der Oost J."/>
            <person name="Weissenbach J."/>
            <person name="Zivanovic Y."/>
            <person name="Forterre P."/>
        </authorList>
    </citation>
    <scope>NUCLEOTIDE SEQUENCE [LARGE SCALE GENOMIC DNA]</scope>
    <source>
        <strain>GE5 / Orsay</strain>
    </source>
</reference>
<reference key="2">
    <citation type="journal article" date="2012" name="Curr. Microbiol.">
        <title>Re-annotation of two hyperthermophilic archaea Pyrococcus abyssi GE5 and Pyrococcus furiosus DSM 3638.</title>
        <authorList>
            <person name="Gao J."/>
            <person name="Wang J."/>
        </authorList>
    </citation>
    <scope>GENOME REANNOTATION</scope>
    <source>
        <strain>GE5 / Orsay</strain>
    </source>
</reference>
<organism>
    <name type="scientific">Pyrococcus abyssi (strain GE5 / Orsay)</name>
    <dbReference type="NCBI Taxonomy" id="272844"/>
    <lineage>
        <taxon>Archaea</taxon>
        <taxon>Methanobacteriati</taxon>
        <taxon>Methanobacteriota</taxon>
        <taxon>Thermococci</taxon>
        <taxon>Thermococcales</taxon>
        <taxon>Thermococcaceae</taxon>
        <taxon>Pyrococcus</taxon>
    </lineage>
</organism>
<protein>
    <recommendedName>
        <fullName evidence="1">tRNA-splicing ligase RtcB</fullName>
        <ecNumber evidence="1">6.5.1.8</ecNumber>
    </recommendedName>
    <alternativeName>
        <fullName evidence="1">3'-phosphate/5'-hydroxy nucleic acid ligase</fullName>
    </alternativeName>
    <component>
        <recommendedName>
            <fullName>Pab hyp2 intein</fullName>
            <ecNumber>3.1.-.-</ecNumber>
        </recommendedName>
    </component>
</protein>
<dbReference type="EC" id="6.5.1.8" evidence="1"/>
<dbReference type="EC" id="3.1.-.-"/>
<dbReference type="EMBL" id="AJ248284">
    <property type="protein sequence ID" value="CAB49482.1"/>
    <property type="molecule type" value="Genomic_DNA"/>
</dbReference>
<dbReference type="EMBL" id="HE613800">
    <property type="protein sequence ID" value="CCE69950.1"/>
    <property type="molecule type" value="Genomic_DNA"/>
</dbReference>
<dbReference type="PIR" id="C75175">
    <property type="entry name" value="C75175"/>
</dbReference>
<dbReference type="RefSeq" id="WP_010867684.1">
    <property type="nucleotide sequence ID" value="NC_000868.1"/>
</dbReference>
<dbReference type="SMR" id="Q9V168"/>
<dbReference type="STRING" id="272844.PAB0383"/>
<dbReference type="KEGG" id="pab:PAB0383"/>
<dbReference type="PATRIC" id="fig|272844.11.peg.596"/>
<dbReference type="eggNOG" id="arCOG03158">
    <property type="taxonomic scope" value="Archaea"/>
</dbReference>
<dbReference type="eggNOG" id="arCOG04246">
    <property type="taxonomic scope" value="Archaea"/>
</dbReference>
<dbReference type="HOGENOM" id="CLU_012374_0_0_2"/>
<dbReference type="OrthoDB" id="9887at2157"/>
<dbReference type="PhylomeDB" id="Q9V168"/>
<dbReference type="Proteomes" id="UP000000810">
    <property type="component" value="Chromosome"/>
</dbReference>
<dbReference type="Proteomes" id="UP000009139">
    <property type="component" value="Chromosome"/>
</dbReference>
<dbReference type="GO" id="GO:0003677">
    <property type="term" value="F:DNA binding"/>
    <property type="evidence" value="ECO:0007669"/>
    <property type="project" value="UniProtKB-KW"/>
</dbReference>
<dbReference type="GO" id="GO:0004519">
    <property type="term" value="F:endonuclease activity"/>
    <property type="evidence" value="ECO:0007669"/>
    <property type="project" value="UniProtKB-KW"/>
</dbReference>
<dbReference type="GO" id="GO:0005525">
    <property type="term" value="F:GTP binding"/>
    <property type="evidence" value="ECO:0007669"/>
    <property type="project" value="UniProtKB-KW"/>
</dbReference>
<dbReference type="GO" id="GO:0046872">
    <property type="term" value="F:metal ion binding"/>
    <property type="evidence" value="ECO:0007669"/>
    <property type="project" value="UniProtKB-KW"/>
</dbReference>
<dbReference type="GO" id="GO:0003972">
    <property type="term" value="F:RNA ligase (ATP) activity"/>
    <property type="evidence" value="ECO:0007669"/>
    <property type="project" value="TreeGrafter"/>
</dbReference>
<dbReference type="GO" id="GO:0170057">
    <property type="term" value="F:RNA ligase (GTP) activity"/>
    <property type="evidence" value="ECO:0007669"/>
    <property type="project" value="UniProtKB-EC"/>
</dbReference>
<dbReference type="GO" id="GO:0016539">
    <property type="term" value="P:intein-mediated protein splicing"/>
    <property type="evidence" value="ECO:0007669"/>
    <property type="project" value="InterPro"/>
</dbReference>
<dbReference type="GO" id="GO:0006314">
    <property type="term" value="P:intron homing"/>
    <property type="evidence" value="ECO:0007669"/>
    <property type="project" value="UniProtKB-KW"/>
</dbReference>
<dbReference type="GO" id="GO:0008033">
    <property type="term" value="P:tRNA processing"/>
    <property type="evidence" value="ECO:0007669"/>
    <property type="project" value="UniProtKB-KW"/>
</dbReference>
<dbReference type="CDD" id="cd00081">
    <property type="entry name" value="Hint"/>
    <property type="match status" value="2"/>
</dbReference>
<dbReference type="FunFam" id="3.10.28.10:FF:000020">
    <property type="entry name" value="tRNA-splicing ligase RtcB"/>
    <property type="match status" value="1"/>
</dbReference>
<dbReference type="FunFam" id="3.90.1860.10:FF:000007">
    <property type="entry name" value="tRNA-splicing ligase RtcB"/>
    <property type="match status" value="1"/>
</dbReference>
<dbReference type="Gene3D" id="3.10.28.10">
    <property type="entry name" value="Homing endonucleases"/>
    <property type="match status" value="1"/>
</dbReference>
<dbReference type="Gene3D" id="3.90.1860.10">
    <property type="entry name" value="tRNA-splicing ligase RtcB"/>
    <property type="match status" value="2"/>
</dbReference>
<dbReference type="InterPro" id="IPR003586">
    <property type="entry name" value="Hint_dom_C"/>
</dbReference>
<dbReference type="InterPro" id="IPR003587">
    <property type="entry name" value="Hint_dom_N"/>
</dbReference>
<dbReference type="InterPro" id="IPR036844">
    <property type="entry name" value="Hint_dom_sf"/>
</dbReference>
<dbReference type="InterPro" id="IPR027434">
    <property type="entry name" value="Homing_endonucl"/>
</dbReference>
<dbReference type="InterPro" id="IPR006142">
    <property type="entry name" value="INTEIN"/>
</dbReference>
<dbReference type="InterPro" id="IPR030934">
    <property type="entry name" value="Intein_C"/>
</dbReference>
<dbReference type="InterPro" id="IPR004042">
    <property type="entry name" value="Intein_endonuc_central"/>
</dbReference>
<dbReference type="InterPro" id="IPR006141">
    <property type="entry name" value="Intein_N"/>
</dbReference>
<dbReference type="InterPro" id="IPR004860">
    <property type="entry name" value="LAGLIDADG_dom"/>
</dbReference>
<dbReference type="InterPro" id="IPR001233">
    <property type="entry name" value="RtcB"/>
</dbReference>
<dbReference type="InterPro" id="IPR036025">
    <property type="entry name" value="RtcB-like_sf"/>
</dbReference>
<dbReference type="NCBIfam" id="TIGR01443">
    <property type="entry name" value="intein_Cterm"/>
    <property type="match status" value="1"/>
</dbReference>
<dbReference type="NCBIfam" id="TIGR01445">
    <property type="entry name" value="intein_Nterm"/>
    <property type="match status" value="1"/>
</dbReference>
<dbReference type="PANTHER" id="PTHR11118">
    <property type="entry name" value="RNA-SPLICING LIGASE RTCB HOMOLOG"/>
    <property type="match status" value="1"/>
</dbReference>
<dbReference type="PANTHER" id="PTHR11118:SF1">
    <property type="entry name" value="RNA-SPLICING LIGASE RTCB HOMOLOG"/>
    <property type="match status" value="1"/>
</dbReference>
<dbReference type="Pfam" id="PF14890">
    <property type="entry name" value="Intein_splicing"/>
    <property type="match status" value="1"/>
</dbReference>
<dbReference type="Pfam" id="PF14528">
    <property type="entry name" value="LAGLIDADG_3"/>
    <property type="match status" value="1"/>
</dbReference>
<dbReference type="Pfam" id="PF01139">
    <property type="entry name" value="RtcB"/>
    <property type="match status" value="2"/>
</dbReference>
<dbReference type="PRINTS" id="PR00379">
    <property type="entry name" value="INTEIN"/>
</dbReference>
<dbReference type="SMART" id="SM00305">
    <property type="entry name" value="HintC"/>
    <property type="match status" value="1"/>
</dbReference>
<dbReference type="SMART" id="SM00306">
    <property type="entry name" value="HintN"/>
    <property type="match status" value="1"/>
</dbReference>
<dbReference type="SUPFAM" id="SSF51294">
    <property type="entry name" value="Hedgehog/intein (Hint) domain"/>
    <property type="match status" value="1"/>
</dbReference>
<dbReference type="SUPFAM" id="SSF55608">
    <property type="entry name" value="Homing endonucleases"/>
    <property type="match status" value="1"/>
</dbReference>
<dbReference type="SUPFAM" id="SSF103365">
    <property type="entry name" value="Hypothetical protein PH1602"/>
    <property type="match status" value="2"/>
</dbReference>
<dbReference type="PROSITE" id="PS50818">
    <property type="entry name" value="INTEIN_C_TER"/>
    <property type="match status" value="1"/>
</dbReference>
<dbReference type="PROSITE" id="PS50819">
    <property type="entry name" value="INTEIN_ENDONUCLEASE"/>
    <property type="match status" value="1"/>
</dbReference>
<dbReference type="PROSITE" id="PS50817">
    <property type="entry name" value="INTEIN_N_TER"/>
    <property type="match status" value="1"/>
</dbReference>
<feature type="chain" id="PRO_0000232529" description="tRNA-splicing ligase RtcB, 1st part" evidence="2">
    <location>
        <begin position="1"/>
        <end position="97"/>
    </location>
</feature>
<feature type="chain" id="PRO_0000232530" description="Pab hyp2 intein" evidence="2">
    <location>
        <begin position="98"/>
        <end position="533"/>
    </location>
</feature>
<feature type="chain" id="PRO_0000232531" description="tRNA-splicing ligase RtcB, 2nd part" evidence="2">
    <location>
        <begin position="534"/>
        <end position="916"/>
    </location>
</feature>
<feature type="domain" description="DOD-type homing endonuclease" evidence="3">
    <location>
        <begin position="248"/>
        <end position="409"/>
    </location>
</feature>
<feature type="active site" description="GMP-histidine intermediate" evidence="1">
    <location>
        <position position="839"/>
    </location>
</feature>
<feature type="binding site" evidence="1">
    <location>
        <position position="95"/>
    </location>
    <ligand>
        <name>Mn(2+)</name>
        <dbReference type="ChEBI" id="CHEBI:29035"/>
        <label>1</label>
    </ligand>
</feature>
<feature type="binding site" evidence="1">
    <location>
        <position position="534"/>
    </location>
    <ligand>
        <name>Mn(2+)</name>
        <dbReference type="ChEBI" id="CHEBI:29035"/>
        <label>1</label>
    </ligand>
</feature>
<feature type="binding site" evidence="1">
    <location>
        <position position="534"/>
    </location>
    <ligand>
        <name>Mn(2+)</name>
        <dbReference type="ChEBI" id="CHEBI:29035"/>
        <label>2</label>
    </ligand>
</feature>
<feature type="binding site" evidence="1">
    <location>
        <begin position="638"/>
        <end position="642"/>
    </location>
    <ligand>
        <name>GMP</name>
        <dbReference type="ChEBI" id="CHEBI:58115"/>
    </ligand>
</feature>
<feature type="binding site" evidence="1">
    <location>
        <position position="639"/>
    </location>
    <ligand>
        <name>Mn(2+)</name>
        <dbReference type="ChEBI" id="CHEBI:29035"/>
        <label>1</label>
    </ligand>
</feature>
<feature type="binding site" evidence="1">
    <location>
        <position position="670"/>
    </location>
    <ligand>
        <name>Mn(2+)</name>
        <dbReference type="ChEBI" id="CHEBI:29035"/>
        <label>2</label>
    </ligand>
</feature>
<feature type="binding site" evidence="1">
    <location>
        <begin position="764"/>
        <end position="765"/>
    </location>
    <ligand>
        <name>GMP</name>
        <dbReference type="ChEBI" id="CHEBI:58115"/>
    </ligand>
</feature>
<feature type="binding site" evidence="1">
    <location>
        <position position="764"/>
    </location>
    <ligand>
        <name>Mn(2+)</name>
        <dbReference type="ChEBI" id="CHEBI:29035"/>
        <label>2</label>
    </ligand>
</feature>
<feature type="binding site" evidence="1">
    <location>
        <begin position="813"/>
        <end position="816"/>
    </location>
    <ligand>
        <name>GMP</name>
        <dbReference type="ChEBI" id="CHEBI:58115"/>
    </ligand>
</feature>
<feature type="binding site" evidence="1">
    <location>
        <position position="820"/>
    </location>
    <ligand>
        <name>GMP</name>
        <dbReference type="ChEBI" id="CHEBI:58115"/>
    </ligand>
</feature>
<feature type="binding site" evidence="1">
    <location>
        <begin position="839"/>
        <end position="842"/>
    </location>
    <ligand>
        <name>GMP</name>
        <dbReference type="ChEBI" id="CHEBI:58115"/>
    </ligand>
</feature>
<feature type="binding site" evidence="1">
    <location>
        <position position="915"/>
    </location>
    <ligand>
        <name>GMP</name>
        <dbReference type="ChEBI" id="CHEBI:58115"/>
    </ligand>
</feature>